<evidence type="ECO:0000250" key="1">
    <source>
        <dbReference type="UniProtKB" id="O95670"/>
    </source>
</evidence>
<evidence type="ECO:0000250" key="2">
    <source>
        <dbReference type="UniProtKB" id="Q0VCV6"/>
    </source>
</evidence>
<evidence type="ECO:0000256" key="3">
    <source>
        <dbReference type="SAM" id="MobiDB-lite"/>
    </source>
</evidence>
<evidence type="ECO:0000305" key="4"/>
<organism>
    <name type="scientific">Sus scrofa</name>
    <name type="common">Pig</name>
    <dbReference type="NCBI Taxonomy" id="9823"/>
    <lineage>
        <taxon>Eukaryota</taxon>
        <taxon>Metazoa</taxon>
        <taxon>Chordata</taxon>
        <taxon>Craniata</taxon>
        <taxon>Vertebrata</taxon>
        <taxon>Euteleostomi</taxon>
        <taxon>Mammalia</taxon>
        <taxon>Eutheria</taxon>
        <taxon>Laurasiatheria</taxon>
        <taxon>Artiodactyla</taxon>
        <taxon>Suina</taxon>
        <taxon>Suidae</taxon>
        <taxon>Sus</taxon>
    </lineage>
</organism>
<proteinExistence type="inferred from homology"/>
<sequence length="118" mass="13579">MASQSQGIQQLLQAEKRAAEKVADARKRKARRLKQAKEEAQMEVEQYRREREQEFQSKQQAAMGSQGNLSAEVEQATRRQVQGMQSSQQRNRERVLAQLLGMVCDVRPQVHPNYRIAA</sequence>
<name>VATG2_PIG</name>
<keyword id="KW-0968">Cytoplasmic vesicle</keyword>
<keyword id="KW-0375">Hydrogen ion transport</keyword>
<keyword id="KW-0406">Ion transport</keyword>
<keyword id="KW-0472">Membrane</keyword>
<keyword id="KW-1185">Reference proteome</keyword>
<keyword id="KW-0813">Transport</keyword>
<feature type="chain" id="PRO_0000192903" description="V-type proton ATPase subunit G 2">
    <location>
        <begin position="1"/>
        <end position="118"/>
    </location>
</feature>
<feature type="region of interest" description="Disordered" evidence="3">
    <location>
        <begin position="26"/>
        <end position="90"/>
    </location>
</feature>
<feature type="compositionally biased region" description="Basic and acidic residues" evidence="3">
    <location>
        <begin position="35"/>
        <end position="55"/>
    </location>
</feature>
<feature type="compositionally biased region" description="Polar residues" evidence="3">
    <location>
        <begin position="56"/>
        <end position="69"/>
    </location>
</feature>
<feature type="compositionally biased region" description="Polar residues" evidence="3">
    <location>
        <begin position="78"/>
        <end position="89"/>
    </location>
</feature>
<accession>Q9TSV6</accession>
<comment type="function">
    <text evidence="2">Subunit of the V1 complex of vacuolar(H+)-ATPase (V-ATPase), a multisubunit enzyme composed of a peripheral complex (V1) that hydrolyzes ATP and a membrane integral complex (V0) that translocates protons. V-ATPase is responsible for acidifying and maintaining the pH of intracellular compartments and in some cell types, is targeted to the plasma membrane, where it is responsible for acidifying the extracellular environment.</text>
</comment>
<comment type="subunit">
    <text evidence="2">V-ATPase is a heteromultimeric enzyme made up of two complexes: the ATP-hydrolytic V1 complex and the proton translocation V0 complex. The V1 complex consists of three catalytic AB heterodimers that form a heterohexamer, three peripheral stalks each consisting of EG heterodimers, one central rotor including subunits D and F, and the regulatory subunits C and H. The proton translocation complex V0 consists of the proton transport subunit a, a ring of proteolipid subunits c9c'', rotary subunit d, subunits e and f, and the accessory subunits ATP6AP1/Ac45 and ATP6AP2/PRR.</text>
</comment>
<comment type="subcellular location">
    <subcellularLocation>
        <location evidence="1">Melanosome</location>
    </subcellularLocation>
    <subcellularLocation>
        <location evidence="2">Cytoplasmic vesicle</location>
        <location evidence="2">Clathrin-coated vesicle membrane</location>
        <topology evidence="4">Peripheral membrane protein</topology>
    </subcellularLocation>
    <text evidence="1">Highly enriched in late-stage melanosomes.</text>
</comment>
<comment type="similarity">
    <text evidence="4">Belongs to the V-ATPase G subunit family.</text>
</comment>
<protein>
    <recommendedName>
        <fullName>V-type proton ATPase subunit G 2</fullName>
        <shortName>V-ATPase subunit G 2</shortName>
    </recommendedName>
    <alternativeName>
        <fullName>Vacuolar proton pump subunit G 2</fullName>
    </alternativeName>
</protein>
<gene>
    <name type="primary">ATP6V1G2</name>
    <name type="synonym">ATP6G2</name>
</gene>
<reference key="1">
    <citation type="journal article" date="2001" name="Tissue Antigens">
        <title>Sequence of the swine major histocompatibility complex region containing all non-classical class I genes.</title>
        <authorList>
            <person name="Chardon P."/>
            <person name="Rogel-Gaillard C."/>
            <person name="Cattolico L."/>
            <person name="Duprat S."/>
            <person name="Vaiman M."/>
            <person name="Renard C."/>
        </authorList>
    </citation>
    <scope>NUCLEOTIDE SEQUENCE [LARGE SCALE GENOMIC DNA]</scope>
    <source>
        <strain>Large white</strain>
        <tissue>Fibroblast</tissue>
    </source>
</reference>
<dbReference type="EMBL" id="AJ251914">
    <property type="protein sequence ID" value="CAB63855.1"/>
    <property type="molecule type" value="Genomic_DNA"/>
</dbReference>
<dbReference type="RefSeq" id="NP_001138852.1">
    <property type="nucleotide sequence ID" value="NM_001145380.1"/>
</dbReference>
<dbReference type="SMR" id="Q9TSV6"/>
<dbReference type="FunCoup" id="Q9TSV6">
    <property type="interactions" value="790"/>
</dbReference>
<dbReference type="STRING" id="9823.ENSSSCP00000031116"/>
<dbReference type="PaxDb" id="9823-ENSSSCP00000031116"/>
<dbReference type="PeptideAtlas" id="Q9TSV6"/>
<dbReference type="Ensembl" id="ENSSSCT00000035387.4">
    <property type="protein sequence ID" value="ENSSSCP00000031116.1"/>
    <property type="gene ID" value="ENSSSCG00000001401.7"/>
</dbReference>
<dbReference type="Ensembl" id="ENSSSCT00015076126.1">
    <property type="protein sequence ID" value="ENSSSCP00015030573.1"/>
    <property type="gene ID" value="ENSSSCG00015056902.1"/>
</dbReference>
<dbReference type="Ensembl" id="ENSSSCT00025108218.1">
    <property type="protein sequence ID" value="ENSSSCP00025048973.1"/>
    <property type="gene ID" value="ENSSSCG00025077754.1"/>
</dbReference>
<dbReference type="Ensembl" id="ENSSSCT00030092095.1">
    <property type="protein sequence ID" value="ENSSSCP00030042382.1"/>
    <property type="gene ID" value="ENSSSCG00030065892.1"/>
</dbReference>
<dbReference type="Ensembl" id="ENSSSCT00035025905.1">
    <property type="protein sequence ID" value="ENSSSCP00035009833.1"/>
    <property type="gene ID" value="ENSSSCG00035019957.1"/>
</dbReference>
<dbReference type="Ensembl" id="ENSSSCT00040097509.1">
    <property type="protein sequence ID" value="ENSSSCP00040043474.1"/>
    <property type="gene ID" value="ENSSSCG00040070944.1"/>
</dbReference>
<dbReference type="Ensembl" id="ENSSSCT00045065938.1">
    <property type="protein sequence ID" value="ENSSSCP00045046704.1"/>
    <property type="gene ID" value="ENSSSCG00045038107.1"/>
</dbReference>
<dbReference type="Ensembl" id="ENSSSCT00050007974.1">
    <property type="protein sequence ID" value="ENSSSCP00050003390.1"/>
    <property type="gene ID" value="ENSSSCG00050005864.1"/>
</dbReference>
<dbReference type="Ensembl" id="ENSSSCT00055057354.1">
    <property type="protein sequence ID" value="ENSSSCP00055045883.1"/>
    <property type="gene ID" value="ENSSSCG00055028896.1"/>
</dbReference>
<dbReference type="Ensembl" id="ENSSSCT00060057833.1">
    <property type="protein sequence ID" value="ENSSSCP00060024747.1"/>
    <property type="gene ID" value="ENSSSCG00060042647.1"/>
</dbReference>
<dbReference type="Ensembl" id="ENSSSCT00065034270.1">
    <property type="protein sequence ID" value="ENSSSCP00065014190.1"/>
    <property type="gene ID" value="ENSSSCG00065025616.1"/>
</dbReference>
<dbReference type="Ensembl" id="ENSSSCT00115014201">
    <property type="protein sequence ID" value="ENSSSCP00115013412"/>
    <property type="gene ID" value="ENSSSCG00115008145"/>
</dbReference>
<dbReference type="GeneID" id="100152358"/>
<dbReference type="KEGG" id="ssc:100152358"/>
<dbReference type="CTD" id="534"/>
<dbReference type="VGNC" id="VGNC:101485">
    <property type="gene designation" value="ATP6V1G2"/>
</dbReference>
<dbReference type="eggNOG" id="KOG1772">
    <property type="taxonomic scope" value="Eukaryota"/>
</dbReference>
<dbReference type="GeneTree" id="ENSGT00940000161280"/>
<dbReference type="HOGENOM" id="CLU_125101_1_1_1"/>
<dbReference type="InParanoid" id="Q9TSV6"/>
<dbReference type="OMA" id="EHMGSKD"/>
<dbReference type="OrthoDB" id="250802at2759"/>
<dbReference type="TreeFam" id="TF313777"/>
<dbReference type="Reactome" id="R-SSC-1222556">
    <property type="pathway name" value="ROS and RNS production in phagocytes"/>
</dbReference>
<dbReference type="Reactome" id="R-SSC-77387">
    <property type="pathway name" value="Insulin receptor recycling"/>
</dbReference>
<dbReference type="Reactome" id="R-SSC-917977">
    <property type="pathway name" value="Transferrin endocytosis and recycling"/>
</dbReference>
<dbReference type="Reactome" id="R-SSC-9639288">
    <property type="pathway name" value="Amino acids regulate mTORC1"/>
</dbReference>
<dbReference type="Reactome" id="R-SSC-983712">
    <property type="pathway name" value="Ion channel transport"/>
</dbReference>
<dbReference type="Proteomes" id="UP000008227">
    <property type="component" value="Chromosome 7"/>
</dbReference>
<dbReference type="Proteomes" id="UP000314985">
    <property type="component" value="Unplaced"/>
</dbReference>
<dbReference type="Proteomes" id="UP000694570">
    <property type="component" value="Unplaced"/>
</dbReference>
<dbReference type="Proteomes" id="UP000694571">
    <property type="component" value="Unplaced"/>
</dbReference>
<dbReference type="Proteomes" id="UP000694720">
    <property type="component" value="Unplaced"/>
</dbReference>
<dbReference type="Proteomes" id="UP000694722">
    <property type="component" value="Unplaced"/>
</dbReference>
<dbReference type="Proteomes" id="UP000694723">
    <property type="component" value="Unplaced"/>
</dbReference>
<dbReference type="Proteomes" id="UP000694724">
    <property type="component" value="Unplaced"/>
</dbReference>
<dbReference type="Proteomes" id="UP000694725">
    <property type="component" value="Unplaced"/>
</dbReference>
<dbReference type="Proteomes" id="UP000694726">
    <property type="component" value="Unplaced"/>
</dbReference>
<dbReference type="Proteomes" id="UP000694727">
    <property type="component" value="Unplaced"/>
</dbReference>
<dbReference type="Proteomes" id="UP000694728">
    <property type="component" value="Unplaced"/>
</dbReference>
<dbReference type="Bgee" id="ENSSSCG00000001401">
    <property type="expression patterns" value="Expressed in hypothalamus and 41 other cell types or tissues"/>
</dbReference>
<dbReference type="ExpressionAtlas" id="Q9TSV6">
    <property type="expression patterns" value="baseline and differential"/>
</dbReference>
<dbReference type="GO" id="GO:0030665">
    <property type="term" value="C:clathrin-coated vesicle membrane"/>
    <property type="evidence" value="ECO:0007669"/>
    <property type="project" value="UniProtKB-SubCell"/>
</dbReference>
<dbReference type="GO" id="GO:0042470">
    <property type="term" value="C:melanosome"/>
    <property type="evidence" value="ECO:0007669"/>
    <property type="project" value="UniProtKB-SubCell"/>
</dbReference>
<dbReference type="GO" id="GO:0030672">
    <property type="term" value="C:synaptic vesicle membrane"/>
    <property type="evidence" value="ECO:0000318"/>
    <property type="project" value="GO_Central"/>
</dbReference>
<dbReference type="GO" id="GO:0000221">
    <property type="term" value="C:vacuolar proton-transporting V-type ATPase, V1 domain"/>
    <property type="evidence" value="ECO:0000250"/>
    <property type="project" value="UniProtKB"/>
</dbReference>
<dbReference type="GO" id="GO:0016887">
    <property type="term" value="F:ATP hydrolysis activity"/>
    <property type="evidence" value="ECO:0000318"/>
    <property type="project" value="GO_Central"/>
</dbReference>
<dbReference type="GO" id="GO:0046961">
    <property type="term" value="F:proton-transporting ATPase activity, rotational mechanism"/>
    <property type="evidence" value="ECO:0000318"/>
    <property type="project" value="GO_Central"/>
</dbReference>
<dbReference type="GO" id="GO:0097401">
    <property type="term" value="P:synaptic vesicle lumen acidification"/>
    <property type="evidence" value="ECO:0000318"/>
    <property type="project" value="GO_Central"/>
</dbReference>
<dbReference type="FunFam" id="1.20.5.2950:FF:000001">
    <property type="entry name" value="V-type proton ATPase subunit G"/>
    <property type="match status" value="1"/>
</dbReference>
<dbReference type="FunFam" id="1.20.5.620:FF:000004">
    <property type="entry name" value="V-type proton ATPase subunit G"/>
    <property type="match status" value="1"/>
</dbReference>
<dbReference type="Gene3D" id="1.20.5.2950">
    <property type="match status" value="1"/>
</dbReference>
<dbReference type="InterPro" id="IPR005124">
    <property type="entry name" value="V-ATPase_G"/>
</dbReference>
<dbReference type="NCBIfam" id="TIGR01147">
    <property type="entry name" value="V_ATP_synt_G"/>
    <property type="match status" value="1"/>
</dbReference>
<dbReference type="PANTHER" id="PTHR12713:SF13">
    <property type="entry name" value="V-TYPE PROTON ATPASE SUBUNIT G 2"/>
    <property type="match status" value="1"/>
</dbReference>
<dbReference type="PANTHER" id="PTHR12713">
    <property type="entry name" value="VACUOLAR ATP SYNTHASE SUBUNIT G"/>
    <property type="match status" value="1"/>
</dbReference>
<dbReference type="Pfam" id="PF03179">
    <property type="entry name" value="V-ATPase_G"/>
    <property type="match status" value="1"/>
</dbReference>